<name>SY1_PHYPO</name>
<protein>
    <recommendedName>
        <fullName>Putative isoleucine--tRNA ligase</fullName>
        <ecNumber>6.1.1.5</ecNumber>
    </recommendedName>
    <alternativeName>
        <fullName>Isoleucyl-tRNA synthetase</fullName>
        <shortName>IleRS</shortName>
    </alternativeName>
</protein>
<reference key="1">
    <citation type="journal article" date="2005" name="Cell Struct. Funct.">
        <title>Class-specific binding of two aminoacyl-tRNA synthetases to annexin, a Ca2+- and phospholipid-binding protein.</title>
        <authorList>
            <person name="Shirakawa T."/>
            <person name="Nakamura A."/>
            <person name="Kohama K."/>
            <person name="Hirakata M."/>
            <person name="Ogihara S."/>
        </authorList>
    </citation>
    <scope>PROTEIN SEQUENCE</scope>
    <scope>SUBUNIT</scope>
</reference>
<sequence>LSGVRVTDLHAGVNPGDPVEVFYAVKYTPLFNYFLKVMPYSTVLTTSLINILYXDNVALAFXXI</sequence>
<feature type="chain" id="PRO_0000098606" description="Putative isoleucine--tRNA ligase">
    <location>
        <begin position="1" status="less than"/>
        <end position="64" status="greater than"/>
    </location>
</feature>
<feature type="non-consecutive residues" evidence="3">
    <location>
        <begin position="10"/>
        <end position="11"/>
    </location>
</feature>
<feature type="non-consecutive residues" evidence="3">
    <location>
        <begin position="25"/>
        <end position="26"/>
    </location>
</feature>
<feature type="non-consecutive residues" evidence="3">
    <location>
        <begin position="36"/>
        <end position="37"/>
    </location>
</feature>
<feature type="non-consecutive residues" evidence="3">
    <location>
        <begin position="47"/>
        <end position="48"/>
    </location>
</feature>
<feature type="non-consecutive residues" evidence="3">
    <location>
        <begin position="56"/>
        <end position="57"/>
    </location>
</feature>
<feature type="non-terminal residue" evidence="3">
    <location>
        <position position="1"/>
    </location>
</feature>
<feature type="non-terminal residue" evidence="3">
    <location>
        <position position="64"/>
    </location>
</feature>
<dbReference type="EC" id="6.1.1.5"/>
<dbReference type="GO" id="GO:0005524">
    <property type="term" value="F:ATP binding"/>
    <property type="evidence" value="ECO:0007669"/>
    <property type="project" value="UniProtKB-KW"/>
</dbReference>
<dbReference type="GO" id="GO:0004822">
    <property type="term" value="F:isoleucine-tRNA ligase activity"/>
    <property type="evidence" value="ECO:0007669"/>
    <property type="project" value="UniProtKB-EC"/>
</dbReference>
<dbReference type="GO" id="GO:0006412">
    <property type="term" value="P:translation"/>
    <property type="evidence" value="ECO:0007669"/>
    <property type="project" value="UniProtKB-KW"/>
</dbReference>
<comment type="catalytic activity">
    <reaction>
        <text>tRNA(Ile) + L-isoleucine + ATP = L-isoleucyl-tRNA(Ile) + AMP + diphosphate</text>
        <dbReference type="Rhea" id="RHEA:11060"/>
        <dbReference type="Rhea" id="RHEA-COMP:9666"/>
        <dbReference type="Rhea" id="RHEA-COMP:9695"/>
        <dbReference type="ChEBI" id="CHEBI:30616"/>
        <dbReference type="ChEBI" id="CHEBI:33019"/>
        <dbReference type="ChEBI" id="CHEBI:58045"/>
        <dbReference type="ChEBI" id="CHEBI:78442"/>
        <dbReference type="ChEBI" id="CHEBI:78528"/>
        <dbReference type="ChEBI" id="CHEBI:456215"/>
        <dbReference type="EC" id="6.1.1.5"/>
    </reaction>
</comment>
<comment type="subunit">
    <text evidence="2">Member of a complex that includes annexin.</text>
</comment>
<comment type="similarity">
    <text evidence="1">Belongs to the class-I aminoacyl-tRNA synthetase family.</text>
</comment>
<comment type="caution">
    <text evidence="2">The order of the peptides shown is unknown.</text>
</comment>
<evidence type="ECO:0000255" key="1"/>
<evidence type="ECO:0000269" key="2">
    <source>
    </source>
</evidence>
<evidence type="ECO:0000303" key="3">
    <source>
    </source>
</evidence>
<keyword id="KW-0030">Aminoacyl-tRNA synthetase</keyword>
<keyword id="KW-0067">ATP-binding</keyword>
<keyword id="KW-0903">Direct protein sequencing</keyword>
<keyword id="KW-0436">Ligase</keyword>
<keyword id="KW-0547">Nucleotide-binding</keyword>
<keyword id="KW-0648">Protein biosynthesis</keyword>
<proteinExistence type="evidence at protein level"/>
<organism>
    <name type="scientific">Physarum polycephalum</name>
    <name type="common">Slime mold</name>
    <dbReference type="NCBI Taxonomy" id="5791"/>
    <lineage>
        <taxon>Eukaryota</taxon>
        <taxon>Amoebozoa</taxon>
        <taxon>Evosea</taxon>
        <taxon>Eumycetozoa</taxon>
        <taxon>Myxogastria</taxon>
        <taxon>Myxogastromycetidae</taxon>
        <taxon>Physariida</taxon>
        <taxon>Physaraceae</taxon>
        <taxon>Physarum</taxon>
    </lineage>
</organism>
<accession>P84178</accession>